<comment type="function">
    <text evidence="2">GTP hydrolase that promotes the GTP-dependent binding of aminoacyl-tRNA to the A-site of ribosomes during protein biosynthesis.</text>
</comment>
<comment type="catalytic activity">
    <reaction evidence="2">
        <text>GTP + H2O = GDP + phosphate + H(+)</text>
        <dbReference type="Rhea" id="RHEA:19669"/>
        <dbReference type="ChEBI" id="CHEBI:15377"/>
        <dbReference type="ChEBI" id="CHEBI:15378"/>
        <dbReference type="ChEBI" id="CHEBI:37565"/>
        <dbReference type="ChEBI" id="CHEBI:43474"/>
        <dbReference type="ChEBI" id="CHEBI:58189"/>
        <dbReference type="EC" id="3.6.5.3"/>
    </reaction>
    <physiologicalReaction direction="left-to-right" evidence="2">
        <dbReference type="Rhea" id="RHEA:19670"/>
    </physiologicalReaction>
</comment>
<comment type="subunit">
    <text evidence="2">Monomer.</text>
</comment>
<comment type="subcellular location">
    <subcellularLocation>
        <location evidence="2">Cytoplasm</location>
    </subcellularLocation>
</comment>
<comment type="similarity">
    <text evidence="2">Belongs to the TRAFAC class translation factor GTPase superfamily. Classic translation factor GTPase family. EF-Tu/EF-1A subfamily.</text>
</comment>
<keyword id="KW-0963">Cytoplasm</keyword>
<keyword id="KW-0251">Elongation factor</keyword>
<keyword id="KW-0342">GTP-binding</keyword>
<keyword id="KW-0378">Hydrolase</keyword>
<keyword id="KW-0460">Magnesium</keyword>
<keyword id="KW-0479">Metal-binding</keyword>
<keyword id="KW-0547">Nucleotide-binding</keyword>
<keyword id="KW-0648">Protein biosynthesis</keyword>
<accession>P42476</accession>
<evidence type="ECO:0000250" key="1"/>
<evidence type="ECO:0000255" key="2">
    <source>
        <dbReference type="HAMAP-Rule" id="MF_00118"/>
    </source>
</evidence>
<organism>
    <name type="scientific">Terrimonas ferruginea</name>
    <name type="common">Flavobacterium ferrugineum</name>
    <dbReference type="NCBI Taxonomy" id="249"/>
    <lineage>
        <taxon>Bacteria</taxon>
        <taxon>Pseudomonadati</taxon>
        <taxon>Bacteroidota</taxon>
        <taxon>Chitinophagia</taxon>
        <taxon>Chitinophagales</taxon>
        <taxon>Chitinophagaceae</taxon>
        <taxon>Terrimonas</taxon>
    </lineage>
</organism>
<name>EFTU_TERFE</name>
<proteinExistence type="inferred from homology"/>
<dbReference type="EC" id="3.6.5.3" evidence="2"/>
<dbReference type="EMBL" id="X76867">
    <property type="protein sequence ID" value="CAA54195.1"/>
    <property type="molecule type" value="Genomic_DNA"/>
</dbReference>
<dbReference type="SMR" id="P42476"/>
<dbReference type="GO" id="GO:0005829">
    <property type="term" value="C:cytosol"/>
    <property type="evidence" value="ECO:0007669"/>
    <property type="project" value="TreeGrafter"/>
</dbReference>
<dbReference type="GO" id="GO:0005525">
    <property type="term" value="F:GTP binding"/>
    <property type="evidence" value="ECO:0007669"/>
    <property type="project" value="UniProtKB-UniRule"/>
</dbReference>
<dbReference type="GO" id="GO:0003924">
    <property type="term" value="F:GTPase activity"/>
    <property type="evidence" value="ECO:0007669"/>
    <property type="project" value="InterPro"/>
</dbReference>
<dbReference type="GO" id="GO:0003746">
    <property type="term" value="F:translation elongation factor activity"/>
    <property type="evidence" value="ECO:0007669"/>
    <property type="project" value="UniProtKB-UniRule"/>
</dbReference>
<dbReference type="CDD" id="cd01884">
    <property type="entry name" value="EF_Tu"/>
    <property type="match status" value="1"/>
</dbReference>
<dbReference type="CDD" id="cd03697">
    <property type="entry name" value="EFTU_II"/>
    <property type="match status" value="1"/>
</dbReference>
<dbReference type="CDD" id="cd03707">
    <property type="entry name" value="EFTU_III"/>
    <property type="match status" value="1"/>
</dbReference>
<dbReference type="FunFam" id="2.40.30.10:FF:000001">
    <property type="entry name" value="Elongation factor Tu"/>
    <property type="match status" value="1"/>
</dbReference>
<dbReference type="FunFam" id="3.40.50.300:FF:000003">
    <property type="entry name" value="Elongation factor Tu"/>
    <property type="match status" value="1"/>
</dbReference>
<dbReference type="Gene3D" id="3.40.50.300">
    <property type="entry name" value="P-loop containing nucleotide triphosphate hydrolases"/>
    <property type="match status" value="1"/>
</dbReference>
<dbReference type="Gene3D" id="2.40.30.10">
    <property type="entry name" value="Translation factors"/>
    <property type="match status" value="2"/>
</dbReference>
<dbReference type="HAMAP" id="MF_00118_B">
    <property type="entry name" value="EF_Tu_B"/>
    <property type="match status" value="1"/>
</dbReference>
<dbReference type="InterPro" id="IPR041709">
    <property type="entry name" value="EF-Tu_GTP-bd"/>
</dbReference>
<dbReference type="InterPro" id="IPR050055">
    <property type="entry name" value="EF-Tu_GTPase"/>
</dbReference>
<dbReference type="InterPro" id="IPR004161">
    <property type="entry name" value="EFTu-like_2"/>
</dbReference>
<dbReference type="InterPro" id="IPR033720">
    <property type="entry name" value="EFTU_2"/>
</dbReference>
<dbReference type="InterPro" id="IPR031157">
    <property type="entry name" value="G_TR_CS"/>
</dbReference>
<dbReference type="InterPro" id="IPR027417">
    <property type="entry name" value="P-loop_NTPase"/>
</dbReference>
<dbReference type="InterPro" id="IPR005225">
    <property type="entry name" value="Small_GTP-bd"/>
</dbReference>
<dbReference type="InterPro" id="IPR000795">
    <property type="entry name" value="T_Tr_GTP-bd_dom"/>
</dbReference>
<dbReference type="InterPro" id="IPR009000">
    <property type="entry name" value="Transl_B-barrel_sf"/>
</dbReference>
<dbReference type="InterPro" id="IPR009001">
    <property type="entry name" value="Transl_elong_EF1A/Init_IF2_C"/>
</dbReference>
<dbReference type="InterPro" id="IPR004541">
    <property type="entry name" value="Transl_elong_EFTu/EF1A_bac/org"/>
</dbReference>
<dbReference type="InterPro" id="IPR004160">
    <property type="entry name" value="Transl_elong_EFTu/EF1A_C"/>
</dbReference>
<dbReference type="NCBIfam" id="TIGR00485">
    <property type="entry name" value="EF-Tu"/>
    <property type="match status" value="1"/>
</dbReference>
<dbReference type="NCBIfam" id="NF000766">
    <property type="entry name" value="PRK00049.1"/>
    <property type="match status" value="1"/>
</dbReference>
<dbReference type="NCBIfam" id="NF009372">
    <property type="entry name" value="PRK12735.1"/>
    <property type="match status" value="1"/>
</dbReference>
<dbReference type="NCBIfam" id="NF009373">
    <property type="entry name" value="PRK12736.1"/>
    <property type="match status" value="1"/>
</dbReference>
<dbReference type="NCBIfam" id="TIGR00231">
    <property type="entry name" value="small_GTP"/>
    <property type="match status" value="1"/>
</dbReference>
<dbReference type="PANTHER" id="PTHR43721:SF22">
    <property type="entry name" value="ELONGATION FACTOR TU, MITOCHONDRIAL"/>
    <property type="match status" value="1"/>
</dbReference>
<dbReference type="PANTHER" id="PTHR43721">
    <property type="entry name" value="ELONGATION FACTOR TU-RELATED"/>
    <property type="match status" value="1"/>
</dbReference>
<dbReference type="Pfam" id="PF00009">
    <property type="entry name" value="GTP_EFTU"/>
    <property type="match status" value="1"/>
</dbReference>
<dbReference type="Pfam" id="PF03144">
    <property type="entry name" value="GTP_EFTU_D2"/>
    <property type="match status" value="1"/>
</dbReference>
<dbReference type="Pfam" id="PF03143">
    <property type="entry name" value="GTP_EFTU_D3"/>
    <property type="match status" value="1"/>
</dbReference>
<dbReference type="PRINTS" id="PR00315">
    <property type="entry name" value="ELONGATNFCT"/>
</dbReference>
<dbReference type="SUPFAM" id="SSF50465">
    <property type="entry name" value="EF-Tu/eEF-1alpha/eIF2-gamma C-terminal domain"/>
    <property type="match status" value="1"/>
</dbReference>
<dbReference type="SUPFAM" id="SSF52540">
    <property type="entry name" value="P-loop containing nucleoside triphosphate hydrolases"/>
    <property type="match status" value="1"/>
</dbReference>
<dbReference type="SUPFAM" id="SSF50447">
    <property type="entry name" value="Translation proteins"/>
    <property type="match status" value="1"/>
</dbReference>
<dbReference type="PROSITE" id="PS00301">
    <property type="entry name" value="G_TR_1"/>
    <property type="match status" value="1"/>
</dbReference>
<dbReference type="PROSITE" id="PS51722">
    <property type="entry name" value="G_TR_2"/>
    <property type="match status" value="1"/>
</dbReference>
<reference key="1">
    <citation type="journal article" date="1993" name="Antonie Van Leeuwenhoek">
        <title>Phylogenetic relationships of Bacteria based on comparative sequence analysis of elongation factor Tu and ATP-synthase beta-subunit genes.</title>
        <authorList>
            <person name="Ludwig W."/>
            <person name="Neumaier J."/>
            <person name="Klugbauer N."/>
            <person name="Brockmann E."/>
            <person name="Roller C."/>
            <person name="Klugbauer S."/>
            <person name="Reetz K."/>
            <person name="Schachtner I."/>
            <person name="Ludvigsen A."/>
            <person name="Bachleitner M."/>
            <person name="Fischer U."/>
            <person name="Schleifer K.H."/>
        </authorList>
    </citation>
    <scope>NUCLEOTIDE SEQUENCE [GENOMIC DNA]</scope>
    <source>
        <strain>ATCC 13524 / DSM 30193 / JCM 21559 / LMG 4021 / NBRC 14992 / NCIMB 11299 / IAM 15098 / 3576</strain>
    </source>
</reference>
<sequence length="395" mass="43166">MAKETFKREKPHVNIGTIGHVDHGKTTLTAAITDILSKKGLAQAKKYDEIDGAPEEKERGITINTAHVEYETANRHYAHVDCPGHADYVKNMITGAAQMDGAILVVAASDGPMPQTKEHILLAAQVGVPKMVVFLNKVDLVDDEELLELVEIEVREELTKRGFDGDNTPIIKGSATGALAGEEKWVKEIENLMDAVDSYIPLPPRPVDLPFLMSVEDVFSITGRGTVATGRIERGRIKVGEPVEIVGLQESPLNSTVTGVEMFRKLLDEGEAGDNAGLLLRGVEKTQIRRGMVIVKPGSITPHTDFKGEVYVLSKDEGGRHTPFFNKYRPQFYFRTTDVTGEVELNAGTEMVMPGDNTNLTVKLIQPIAMEKGLKFAIREGGRTVGAGQVTEILK</sequence>
<feature type="chain" id="PRO_0000091326" description="Elongation factor Tu">
    <location>
        <begin position="1"/>
        <end position="395"/>
    </location>
</feature>
<feature type="domain" description="tr-type G">
    <location>
        <begin position="10"/>
        <end position="205"/>
    </location>
</feature>
<feature type="region of interest" description="G1" evidence="1">
    <location>
        <begin position="19"/>
        <end position="26"/>
    </location>
</feature>
<feature type="region of interest" description="G2" evidence="1">
    <location>
        <begin position="60"/>
        <end position="64"/>
    </location>
</feature>
<feature type="region of interest" description="G3" evidence="1">
    <location>
        <begin position="81"/>
        <end position="84"/>
    </location>
</feature>
<feature type="region of interest" description="G4" evidence="1">
    <location>
        <begin position="136"/>
        <end position="139"/>
    </location>
</feature>
<feature type="region of interest" description="G5" evidence="1">
    <location>
        <begin position="174"/>
        <end position="176"/>
    </location>
</feature>
<feature type="binding site" evidence="2">
    <location>
        <begin position="19"/>
        <end position="26"/>
    </location>
    <ligand>
        <name>GTP</name>
        <dbReference type="ChEBI" id="CHEBI:37565"/>
    </ligand>
</feature>
<feature type="binding site" evidence="2">
    <location>
        <position position="26"/>
    </location>
    <ligand>
        <name>Mg(2+)</name>
        <dbReference type="ChEBI" id="CHEBI:18420"/>
    </ligand>
</feature>
<feature type="binding site" evidence="2">
    <location>
        <begin position="81"/>
        <end position="85"/>
    </location>
    <ligand>
        <name>GTP</name>
        <dbReference type="ChEBI" id="CHEBI:37565"/>
    </ligand>
</feature>
<feature type="binding site" evidence="2">
    <location>
        <begin position="136"/>
        <end position="139"/>
    </location>
    <ligand>
        <name>GTP</name>
        <dbReference type="ChEBI" id="CHEBI:37565"/>
    </ligand>
</feature>
<protein>
    <recommendedName>
        <fullName evidence="2">Elongation factor Tu</fullName>
        <shortName evidence="2">EF-Tu</shortName>
        <ecNumber evidence="2">3.6.5.3</ecNumber>
    </recommendedName>
</protein>
<gene>
    <name evidence="2" type="primary">tuf</name>
</gene>